<evidence type="ECO:0000255" key="1">
    <source>
        <dbReference type="HAMAP-Rule" id="MF_00096"/>
    </source>
</evidence>
<comment type="function">
    <text evidence="1">This protein is involved in the repair of mismatches in DNA. It is possible that it carries out the mismatch recognition step. This protein has a weak ATPase activity.</text>
</comment>
<comment type="similarity">
    <text evidence="1">Belongs to the DNA mismatch repair MutS family.</text>
</comment>
<accession>Q8PWA7</accession>
<keyword id="KW-0067">ATP-binding</keyword>
<keyword id="KW-0227">DNA damage</keyword>
<keyword id="KW-0234">DNA repair</keyword>
<keyword id="KW-0238">DNA-binding</keyword>
<keyword id="KW-0547">Nucleotide-binding</keyword>
<proteinExistence type="inferred from homology"/>
<feature type="chain" id="PRO_0000115178" description="DNA mismatch repair protein MutS">
    <location>
        <begin position="1"/>
        <end position="900"/>
    </location>
</feature>
<feature type="binding site" evidence="1">
    <location>
        <begin position="637"/>
        <end position="644"/>
    </location>
    <ligand>
        <name>ATP</name>
        <dbReference type="ChEBI" id="CHEBI:30616"/>
    </ligand>
</feature>
<dbReference type="EMBL" id="AE008384">
    <property type="protein sequence ID" value="AAM31379.1"/>
    <property type="molecule type" value="Genomic_DNA"/>
</dbReference>
<dbReference type="RefSeq" id="WP_011033625.1">
    <property type="nucleotide sequence ID" value="NC_003901.1"/>
</dbReference>
<dbReference type="SMR" id="Q8PWA7"/>
<dbReference type="GeneID" id="44088679"/>
<dbReference type="KEGG" id="mma:MM_1683"/>
<dbReference type="PATRIC" id="fig|192952.21.peg.1950"/>
<dbReference type="eggNOG" id="arCOG02897">
    <property type="taxonomic scope" value="Archaea"/>
</dbReference>
<dbReference type="HOGENOM" id="CLU_002472_3_1_2"/>
<dbReference type="Proteomes" id="UP000000595">
    <property type="component" value="Chromosome"/>
</dbReference>
<dbReference type="GO" id="GO:0005524">
    <property type="term" value="F:ATP binding"/>
    <property type="evidence" value="ECO:0007669"/>
    <property type="project" value="UniProtKB-UniRule"/>
</dbReference>
<dbReference type="GO" id="GO:0140664">
    <property type="term" value="F:ATP-dependent DNA damage sensor activity"/>
    <property type="evidence" value="ECO:0007669"/>
    <property type="project" value="InterPro"/>
</dbReference>
<dbReference type="GO" id="GO:0003684">
    <property type="term" value="F:damaged DNA binding"/>
    <property type="evidence" value="ECO:0007669"/>
    <property type="project" value="UniProtKB-UniRule"/>
</dbReference>
<dbReference type="GO" id="GO:0030983">
    <property type="term" value="F:mismatched DNA binding"/>
    <property type="evidence" value="ECO:0007669"/>
    <property type="project" value="InterPro"/>
</dbReference>
<dbReference type="GO" id="GO:0006298">
    <property type="term" value="P:mismatch repair"/>
    <property type="evidence" value="ECO:0007669"/>
    <property type="project" value="UniProtKB-UniRule"/>
</dbReference>
<dbReference type="CDD" id="cd03284">
    <property type="entry name" value="ABC_MutS1"/>
    <property type="match status" value="1"/>
</dbReference>
<dbReference type="FunFam" id="1.10.1420.10:FF:000007">
    <property type="entry name" value="DNA mismatch repair protein MutS"/>
    <property type="match status" value="1"/>
</dbReference>
<dbReference type="FunFam" id="3.40.1170.10:FF:000001">
    <property type="entry name" value="DNA mismatch repair protein MutS"/>
    <property type="match status" value="1"/>
</dbReference>
<dbReference type="FunFam" id="3.40.50.300:FF:001579">
    <property type="entry name" value="DNA mismatch repair protein MutS"/>
    <property type="match status" value="1"/>
</dbReference>
<dbReference type="Gene3D" id="1.10.1420.10">
    <property type="match status" value="2"/>
</dbReference>
<dbReference type="Gene3D" id="6.10.140.430">
    <property type="match status" value="1"/>
</dbReference>
<dbReference type="Gene3D" id="3.40.1170.10">
    <property type="entry name" value="DNA repair protein MutS, domain I"/>
    <property type="match status" value="1"/>
</dbReference>
<dbReference type="Gene3D" id="3.30.420.110">
    <property type="entry name" value="MutS, connector domain"/>
    <property type="match status" value="1"/>
</dbReference>
<dbReference type="Gene3D" id="3.40.50.300">
    <property type="entry name" value="P-loop containing nucleotide triphosphate hydrolases"/>
    <property type="match status" value="1"/>
</dbReference>
<dbReference type="HAMAP" id="MF_00096">
    <property type="entry name" value="MutS"/>
    <property type="match status" value="1"/>
</dbReference>
<dbReference type="InterPro" id="IPR005748">
    <property type="entry name" value="DNA_mismatch_repair_MutS"/>
</dbReference>
<dbReference type="InterPro" id="IPR007695">
    <property type="entry name" value="DNA_mismatch_repair_MutS-lik_N"/>
</dbReference>
<dbReference type="InterPro" id="IPR017261">
    <property type="entry name" value="DNA_mismatch_repair_MutS/MSH"/>
</dbReference>
<dbReference type="InterPro" id="IPR000432">
    <property type="entry name" value="DNA_mismatch_repair_MutS_C"/>
</dbReference>
<dbReference type="InterPro" id="IPR007861">
    <property type="entry name" value="DNA_mismatch_repair_MutS_clamp"/>
</dbReference>
<dbReference type="InterPro" id="IPR007696">
    <property type="entry name" value="DNA_mismatch_repair_MutS_core"/>
</dbReference>
<dbReference type="InterPro" id="IPR016151">
    <property type="entry name" value="DNA_mismatch_repair_MutS_N"/>
</dbReference>
<dbReference type="InterPro" id="IPR036187">
    <property type="entry name" value="DNA_mismatch_repair_MutS_sf"/>
</dbReference>
<dbReference type="InterPro" id="IPR007860">
    <property type="entry name" value="DNA_mmatch_repair_MutS_con_dom"/>
</dbReference>
<dbReference type="InterPro" id="IPR045076">
    <property type="entry name" value="MutS"/>
</dbReference>
<dbReference type="InterPro" id="IPR036678">
    <property type="entry name" value="MutS_con_dom_sf"/>
</dbReference>
<dbReference type="InterPro" id="IPR027417">
    <property type="entry name" value="P-loop_NTPase"/>
</dbReference>
<dbReference type="NCBIfam" id="TIGR01070">
    <property type="entry name" value="mutS1"/>
    <property type="match status" value="1"/>
</dbReference>
<dbReference type="NCBIfam" id="NF003810">
    <property type="entry name" value="PRK05399.1"/>
    <property type="match status" value="1"/>
</dbReference>
<dbReference type="PANTHER" id="PTHR11361:SF34">
    <property type="entry name" value="DNA MISMATCH REPAIR PROTEIN MSH1, MITOCHONDRIAL"/>
    <property type="match status" value="1"/>
</dbReference>
<dbReference type="PANTHER" id="PTHR11361">
    <property type="entry name" value="DNA MISMATCH REPAIR PROTEIN MUTS FAMILY MEMBER"/>
    <property type="match status" value="1"/>
</dbReference>
<dbReference type="Pfam" id="PF01624">
    <property type="entry name" value="MutS_I"/>
    <property type="match status" value="1"/>
</dbReference>
<dbReference type="Pfam" id="PF05188">
    <property type="entry name" value="MutS_II"/>
    <property type="match status" value="1"/>
</dbReference>
<dbReference type="Pfam" id="PF05192">
    <property type="entry name" value="MutS_III"/>
    <property type="match status" value="1"/>
</dbReference>
<dbReference type="Pfam" id="PF05190">
    <property type="entry name" value="MutS_IV"/>
    <property type="match status" value="1"/>
</dbReference>
<dbReference type="Pfam" id="PF00488">
    <property type="entry name" value="MutS_V"/>
    <property type="match status" value="1"/>
</dbReference>
<dbReference type="PIRSF" id="PIRSF037677">
    <property type="entry name" value="DNA_mis_repair_Msh6"/>
    <property type="match status" value="1"/>
</dbReference>
<dbReference type="SMART" id="SM00534">
    <property type="entry name" value="MUTSac"/>
    <property type="match status" value="1"/>
</dbReference>
<dbReference type="SMART" id="SM00533">
    <property type="entry name" value="MUTSd"/>
    <property type="match status" value="1"/>
</dbReference>
<dbReference type="SUPFAM" id="SSF55271">
    <property type="entry name" value="DNA repair protein MutS, domain I"/>
    <property type="match status" value="1"/>
</dbReference>
<dbReference type="SUPFAM" id="SSF53150">
    <property type="entry name" value="DNA repair protein MutS, domain II"/>
    <property type="match status" value="1"/>
</dbReference>
<dbReference type="SUPFAM" id="SSF48334">
    <property type="entry name" value="DNA repair protein MutS, domain III"/>
    <property type="match status" value="1"/>
</dbReference>
<dbReference type="SUPFAM" id="SSF52540">
    <property type="entry name" value="P-loop containing nucleoside triphosphate hydrolases"/>
    <property type="match status" value="1"/>
</dbReference>
<dbReference type="PROSITE" id="PS00486">
    <property type="entry name" value="DNA_MISMATCH_REPAIR_2"/>
    <property type="match status" value="1"/>
</dbReference>
<name>MUTS_METMA</name>
<sequence>MTEMMTPAMRQYYEAKQAYPDTLIFFRMGDFYESFGEDAKTIAKELEITLTARGKDRSGERMPLAGIPYHAIDTYLPRLINKGYKVAICEQLEDPKQAKGVVKRGVVRVVTPGTAIDSSMFPDASNNYLMAVAGKEVGKTGKSGEKEMEFGLSFLDISTGEFLTTQFTDSGSFDKLLSELARMKPAECILPPTLYGNSVLVDRLREQTIVQEFAPEISGIEEAGEKLKIHFRVSTLEGMGCEKLEFGVYSAWSALEYAKTTQMRDLAHINTLRTYSNTEFMVLDSVTLRNLEIVKNVRDEGDHNSLYRTLSFTKTPMGSRILKKWLLKPLLSVEQINHRLDAVEELAGNPLLRYDIRDWLSEVRDIERLVGRIVYGNANARDLVALKKSLDAVPSIRDCLLEKAGAEMLKGIAEGLASFSEIEELAKMIGNAIVEEPPVSVREGGMIKSGFSEELDELRDISSNSKQWIAAFQQKEKDRTGIKSLKIGYNKVFGYYIEVTNANSSQVPDDYIRKQTMANAERFFTPELKEKESLILTANDKAVALEYEIFTEITETLSAHSKELQETAERIGVLDVLADLAEVAENNNYTRPQLTEDCKILIRDGRHPVVESTVSGGFVPNDTEMDCKENQFLLVTGPNMAGKSTYMRQTALIAIMAQAGSFVPASYASIGVIDQVFTRIGAFDDLASGQSTFMVEMVELANILNNASPKSLVLLDEIGRGTSTYDGYSIAKAVVEFLHNRGKVGIRALFATHYHQLTSLEEKLKRVKNYHIAVKEEGHELVFLRKIVPGATDRSYGIHVARLAGVPEKVIERANEILRELERESVLEESEDCENGKKRKGKATTRYTQMLLFDPGSRSGNSEVKRGLSPVEAALKKMNVDEMTPIEAMNKLHELKKLLG</sequence>
<gene>
    <name evidence="1" type="primary">mutS</name>
    <name type="ordered locus">MM_1683</name>
</gene>
<protein>
    <recommendedName>
        <fullName evidence="1">DNA mismatch repair protein MutS</fullName>
    </recommendedName>
</protein>
<organism>
    <name type="scientific">Methanosarcina mazei (strain ATCC BAA-159 / DSM 3647 / Goe1 / Go1 / JCM 11833 / OCM 88)</name>
    <name type="common">Methanosarcina frisia</name>
    <dbReference type="NCBI Taxonomy" id="192952"/>
    <lineage>
        <taxon>Archaea</taxon>
        <taxon>Methanobacteriati</taxon>
        <taxon>Methanobacteriota</taxon>
        <taxon>Stenosarchaea group</taxon>
        <taxon>Methanomicrobia</taxon>
        <taxon>Methanosarcinales</taxon>
        <taxon>Methanosarcinaceae</taxon>
        <taxon>Methanosarcina</taxon>
    </lineage>
</organism>
<reference key="1">
    <citation type="journal article" date="2002" name="J. Mol. Microbiol. Biotechnol.">
        <title>The genome of Methanosarcina mazei: evidence for lateral gene transfer between Bacteria and Archaea.</title>
        <authorList>
            <person name="Deppenmeier U."/>
            <person name="Johann A."/>
            <person name="Hartsch T."/>
            <person name="Merkl R."/>
            <person name="Schmitz R.A."/>
            <person name="Martinez-Arias R."/>
            <person name="Henne A."/>
            <person name="Wiezer A."/>
            <person name="Baeumer S."/>
            <person name="Jacobi C."/>
            <person name="Brueggemann H."/>
            <person name="Lienard T."/>
            <person name="Christmann A."/>
            <person name="Boemecke M."/>
            <person name="Steckel S."/>
            <person name="Bhattacharyya A."/>
            <person name="Lykidis A."/>
            <person name="Overbeek R."/>
            <person name="Klenk H.-P."/>
            <person name="Gunsalus R.P."/>
            <person name="Fritz H.-J."/>
            <person name="Gottschalk G."/>
        </authorList>
    </citation>
    <scope>NUCLEOTIDE SEQUENCE [LARGE SCALE GENOMIC DNA]</scope>
    <source>
        <strain>ATCC BAA-159 / DSM 3647 / Goe1 / Go1 / JCM 11833 / OCM 88</strain>
    </source>
</reference>